<organism>
    <name type="scientific">Danio rerio</name>
    <name type="common">Zebrafish</name>
    <name type="synonym">Brachydanio rerio</name>
    <dbReference type="NCBI Taxonomy" id="7955"/>
    <lineage>
        <taxon>Eukaryota</taxon>
        <taxon>Metazoa</taxon>
        <taxon>Chordata</taxon>
        <taxon>Craniata</taxon>
        <taxon>Vertebrata</taxon>
        <taxon>Euteleostomi</taxon>
        <taxon>Actinopterygii</taxon>
        <taxon>Neopterygii</taxon>
        <taxon>Teleostei</taxon>
        <taxon>Ostariophysi</taxon>
        <taxon>Cypriniformes</taxon>
        <taxon>Danionidae</taxon>
        <taxon>Danioninae</taxon>
        <taxon>Danio</taxon>
    </lineage>
</organism>
<comment type="similarity">
    <text evidence="2">Belongs to the SLX4IP family.</text>
</comment>
<gene>
    <name type="primary">slx4ip</name>
    <name type="ORF">zgc:64090</name>
</gene>
<keyword id="KW-1185">Reference proteome</keyword>
<evidence type="ECO:0000256" key="1">
    <source>
        <dbReference type="SAM" id="MobiDB-lite"/>
    </source>
</evidence>
<evidence type="ECO:0000305" key="2"/>
<name>SLX4I_DANRE</name>
<protein>
    <recommendedName>
        <fullName>Protein SLX4IP</fullName>
    </recommendedName>
</protein>
<feature type="chain" id="PRO_0000306121" description="Protein SLX4IP">
    <location>
        <begin position="1"/>
        <end position="499"/>
    </location>
</feature>
<feature type="region of interest" description="Disordered" evidence="1">
    <location>
        <begin position="142"/>
        <end position="203"/>
    </location>
</feature>
<feature type="region of interest" description="Disordered" evidence="1">
    <location>
        <begin position="250"/>
        <end position="276"/>
    </location>
</feature>
<feature type="region of interest" description="Disordered" evidence="1">
    <location>
        <begin position="288"/>
        <end position="341"/>
    </location>
</feature>
<feature type="region of interest" description="Disordered" evidence="1">
    <location>
        <begin position="375"/>
        <end position="499"/>
    </location>
</feature>
<feature type="compositionally biased region" description="Polar residues" evidence="1">
    <location>
        <begin position="142"/>
        <end position="162"/>
    </location>
</feature>
<feature type="compositionally biased region" description="Polar residues" evidence="1">
    <location>
        <begin position="179"/>
        <end position="194"/>
    </location>
</feature>
<feature type="compositionally biased region" description="Polar residues" evidence="1">
    <location>
        <begin position="250"/>
        <end position="268"/>
    </location>
</feature>
<feature type="compositionally biased region" description="Low complexity" evidence="1">
    <location>
        <begin position="421"/>
        <end position="432"/>
    </location>
</feature>
<feature type="compositionally biased region" description="Polar residues" evidence="1">
    <location>
        <begin position="441"/>
        <end position="456"/>
    </location>
</feature>
<feature type="compositionally biased region" description="Basic and acidic residues" evidence="1">
    <location>
        <begin position="478"/>
        <end position="490"/>
    </location>
</feature>
<accession>Q7T2B3</accession>
<dbReference type="EMBL" id="BC054616">
    <property type="protein sequence ID" value="AAH54616.1"/>
    <property type="molecule type" value="mRNA"/>
</dbReference>
<dbReference type="RefSeq" id="NP_956705.1">
    <property type="nucleotide sequence ID" value="NM_200411.1"/>
</dbReference>
<dbReference type="FunCoup" id="Q7T2B3">
    <property type="interactions" value="39"/>
</dbReference>
<dbReference type="STRING" id="7955.ENSDARP00000057051"/>
<dbReference type="PaxDb" id="7955-ENSDARP00000057051"/>
<dbReference type="GeneID" id="393383"/>
<dbReference type="KEGG" id="dre:393383"/>
<dbReference type="AGR" id="ZFIN:ZDB-GENE-040426-1365"/>
<dbReference type="CTD" id="128710"/>
<dbReference type="ZFIN" id="ZDB-GENE-040426-1365">
    <property type="gene designation" value="slx4ip"/>
</dbReference>
<dbReference type="eggNOG" id="ENOG502QQHZ">
    <property type="taxonomic scope" value="Eukaryota"/>
</dbReference>
<dbReference type="InParanoid" id="Q7T2B3"/>
<dbReference type="OrthoDB" id="9933290at2759"/>
<dbReference type="PhylomeDB" id="Q7T2B3"/>
<dbReference type="PRO" id="PR:Q7T2B3"/>
<dbReference type="Proteomes" id="UP000000437">
    <property type="component" value="Chromosome 13"/>
</dbReference>
<dbReference type="InterPro" id="IPR031479">
    <property type="entry name" value="SLX4IP"/>
</dbReference>
<dbReference type="PANTHER" id="PTHR28557">
    <property type="entry name" value="PROTEIN SLX4IP"/>
    <property type="match status" value="1"/>
</dbReference>
<dbReference type="PANTHER" id="PTHR28557:SF1">
    <property type="entry name" value="PROTEIN SLX4IP"/>
    <property type="match status" value="1"/>
</dbReference>
<dbReference type="Pfam" id="PF15744">
    <property type="entry name" value="UPF0492"/>
    <property type="match status" value="1"/>
</dbReference>
<reference key="1">
    <citation type="submission" date="2003-07" db="EMBL/GenBank/DDBJ databases">
        <authorList>
            <consortium name="NIH - Zebrafish Gene Collection (ZGC) project"/>
        </authorList>
    </citation>
    <scope>NUCLEOTIDE SEQUENCE [LARGE SCALE MRNA]</scope>
    <source>
        <tissue>Kidney</tissue>
    </source>
</reference>
<sequence length="499" mass="54985">MEPSKFVVKCGNYAVLVDLHILALGDQDNANWFSPAHRKEVGSLIRDALEPRVRQFQEARYQKIQSKPRKDLTPTAPLCLEGGNVRLAVHFMKRHVNLRCIVRQHYRELRVFPERVVVCASPPENSALPNGNLNLDVSEQSQSKYFSNSGETANPLQSSTATKRAVLQKIARKTKIQPPRSQDNQESKTGQFQADNAEKGSRSVLQRITRQANIQPQQCQDDQVYKSGQFQADKQEKGSGDVLQKITRQANIQPQQCQDDQESKSGQVQADKEENGSGDVLHKIAKQTNTQPPQSQDDQEFKSGQFPAGESEKGSRSVLQEIARQANIQSPHSQEDQEFKSGQFQVAEECVEACLPVPISVSSIKSLVDVKALSSSKLSNNKDVTESYLDTTGPRRRPRAPSSSGEDADHQKTKRLRLGQSAVSSDSNNPSSGIAAPDSVCSPQPEISQTNQSGLATSLRGLSVKPVSSGSSISSRPAAREERKGGEPRTSRLRRLKKS</sequence>
<proteinExistence type="evidence at transcript level"/>